<protein>
    <recommendedName>
        <fullName evidence="1">Putative pyruvate, phosphate dikinase regulatory protein</fullName>
        <shortName evidence="1">PPDK regulatory protein</shortName>
        <ecNumber evidence="1">2.7.11.32</ecNumber>
        <ecNumber evidence="1">2.7.4.27</ecNumber>
    </recommendedName>
</protein>
<sequence length="281" mass="31643">MDGDNKTYTIYILSDSTGETAATMIRAALVQYTTKDVNIIRCKNVRTDTQAEAVIEECFERRGMLAYTVASQGLRAKIREMASGKGIPYFDLLGPLLSTLDTFFGQHSEDTVGALRAVDERYFKRIEAIEYTVKHDDGKTFAELDKADIVLVGISRTSKTPLSIFLSHKGWKVANVPLVLDTPLPEELFKIDQRRIVGLIIDMDSLQRIRKSRLEKFGQDPGGSYASMSHIAKEIEYAEKIFKVNRRWPVFNVTERALEETASEIVRIIAARLGLPDSVIF</sequence>
<evidence type="ECO:0000255" key="1">
    <source>
        <dbReference type="HAMAP-Rule" id="MF_00921"/>
    </source>
</evidence>
<organism>
    <name type="scientific">Bdellovibrio bacteriovorus (strain ATCC 15356 / DSM 50701 / NCIMB 9529 / HD100)</name>
    <dbReference type="NCBI Taxonomy" id="264462"/>
    <lineage>
        <taxon>Bacteria</taxon>
        <taxon>Pseudomonadati</taxon>
        <taxon>Bdellovibrionota</taxon>
        <taxon>Bdellovibrionia</taxon>
        <taxon>Bdellovibrionales</taxon>
        <taxon>Pseudobdellovibrionaceae</taxon>
        <taxon>Bdellovibrio</taxon>
    </lineage>
</organism>
<proteinExistence type="inferred from homology"/>
<gene>
    <name type="ordered locus">Bd1093</name>
</gene>
<reference key="1">
    <citation type="journal article" date="2004" name="Science">
        <title>A predator unmasked: life cycle of Bdellovibrio bacteriovorus from a genomic perspective.</title>
        <authorList>
            <person name="Rendulic S."/>
            <person name="Jagtap P."/>
            <person name="Rosinus A."/>
            <person name="Eppinger M."/>
            <person name="Baar C."/>
            <person name="Lanz C."/>
            <person name="Keller H."/>
            <person name="Lambert C."/>
            <person name="Evans K.J."/>
            <person name="Goesmann A."/>
            <person name="Meyer F."/>
            <person name="Sockett R.E."/>
            <person name="Schuster S.C."/>
        </authorList>
    </citation>
    <scope>NUCLEOTIDE SEQUENCE [LARGE SCALE GENOMIC DNA]</scope>
    <source>
        <strain>ATCC 15356 / DSM 50701 / NCIMB 9529 / HD100</strain>
    </source>
</reference>
<feature type="chain" id="PRO_0000196634" description="Putative pyruvate, phosphate dikinase regulatory protein">
    <location>
        <begin position="1"/>
        <end position="281"/>
    </location>
</feature>
<feature type="binding site" evidence="1">
    <location>
        <begin position="153"/>
        <end position="160"/>
    </location>
    <ligand>
        <name>ADP</name>
        <dbReference type="ChEBI" id="CHEBI:456216"/>
    </ligand>
</feature>
<name>PDRP_BDEBA</name>
<accession>Q6MNY2</accession>
<comment type="function">
    <text evidence="1">Bifunctional serine/threonine kinase and phosphorylase involved in the regulation of the pyruvate, phosphate dikinase (PPDK) by catalyzing its phosphorylation/dephosphorylation.</text>
</comment>
<comment type="catalytic activity">
    <reaction evidence="1">
        <text>N(tele)-phospho-L-histidyl/L-threonyl-[pyruvate, phosphate dikinase] + ADP = N(tele)-phospho-L-histidyl/O-phospho-L-threonyl-[pyruvate, phosphate dikinase] + AMP + H(+)</text>
        <dbReference type="Rhea" id="RHEA:43692"/>
        <dbReference type="Rhea" id="RHEA-COMP:10650"/>
        <dbReference type="Rhea" id="RHEA-COMP:10651"/>
        <dbReference type="ChEBI" id="CHEBI:15378"/>
        <dbReference type="ChEBI" id="CHEBI:30013"/>
        <dbReference type="ChEBI" id="CHEBI:61977"/>
        <dbReference type="ChEBI" id="CHEBI:83586"/>
        <dbReference type="ChEBI" id="CHEBI:456215"/>
        <dbReference type="ChEBI" id="CHEBI:456216"/>
        <dbReference type="EC" id="2.7.11.32"/>
    </reaction>
</comment>
<comment type="catalytic activity">
    <reaction evidence="1">
        <text>N(tele)-phospho-L-histidyl/O-phospho-L-threonyl-[pyruvate, phosphate dikinase] + phosphate + H(+) = N(tele)-phospho-L-histidyl/L-threonyl-[pyruvate, phosphate dikinase] + diphosphate</text>
        <dbReference type="Rhea" id="RHEA:43696"/>
        <dbReference type="Rhea" id="RHEA-COMP:10650"/>
        <dbReference type="Rhea" id="RHEA-COMP:10651"/>
        <dbReference type="ChEBI" id="CHEBI:15378"/>
        <dbReference type="ChEBI" id="CHEBI:30013"/>
        <dbReference type="ChEBI" id="CHEBI:33019"/>
        <dbReference type="ChEBI" id="CHEBI:43474"/>
        <dbReference type="ChEBI" id="CHEBI:61977"/>
        <dbReference type="ChEBI" id="CHEBI:83586"/>
        <dbReference type="EC" id="2.7.4.27"/>
    </reaction>
</comment>
<comment type="similarity">
    <text evidence="1">Belongs to the pyruvate, phosphate/water dikinase regulatory protein family. PDRP subfamily.</text>
</comment>
<keyword id="KW-0418">Kinase</keyword>
<keyword id="KW-0547">Nucleotide-binding</keyword>
<keyword id="KW-1185">Reference proteome</keyword>
<keyword id="KW-0723">Serine/threonine-protein kinase</keyword>
<keyword id="KW-0808">Transferase</keyword>
<dbReference type="EC" id="2.7.11.32" evidence="1"/>
<dbReference type="EC" id="2.7.4.27" evidence="1"/>
<dbReference type="EMBL" id="BX842648">
    <property type="protein sequence ID" value="CAE79017.1"/>
    <property type="molecule type" value="Genomic_DNA"/>
</dbReference>
<dbReference type="RefSeq" id="WP_011163619.1">
    <property type="nucleotide sequence ID" value="NC_005363.1"/>
</dbReference>
<dbReference type="SMR" id="Q6MNY2"/>
<dbReference type="STRING" id="264462.Bd1093"/>
<dbReference type="GeneID" id="93012147"/>
<dbReference type="KEGG" id="bba:Bd1093"/>
<dbReference type="eggNOG" id="COG1806">
    <property type="taxonomic scope" value="Bacteria"/>
</dbReference>
<dbReference type="HOGENOM" id="CLU_046206_2_1_7"/>
<dbReference type="Proteomes" id="UP000008080">
    <property type="component" value="Chromosome"/>
</dbReference>
<dbReference type="GO" id="GO:0043531">
    <property type="term" value="F:ADP binding"/>
    <property type="evidence" value="ECO:0007669"/>
    <property type="project" value="UniProtKB-UniRule"/>
</dbReference>
<dbReference type="GO" id="GO:0005524">
    <property type="term" value="F:ATP binding"/>
    <property type="evidence" value="ECO:0007669"/>
    <property type="project" value="InterPro"/>
</dbReference>
<dbReference type="GO" id="GO:0016776">
    <property type="term" value="F:phosphotransferase activity, phosphate group as acceptor"/>
    <property type="evidence" value="ECO:0007669"/>
    <property type="project" value="UniProtKB-UniRule"/>
</dbReference>
<dbReference type="GO" id="GO:0004674">
    <property type="term" value="F:protein serine/threonine kinase activity"/>
    <property type="evidence" value="ECO:0007669"/>
    <property type="project" value="UniProtKB-UniRule"/>
</dbReference>
<dbReference type="HAMAP" id="MF_00921">
    <property type="entry name" value="PDRP"/>
    <property type="match status" value="1"/>
</dbReference>
<dbReference type="InterPro" id="IPR005177">
    <property type="entry name" value="Kinase-pyrophosphorylase"/>
</dbReference>
<dbReference type="InterPro" id="IPR026565">
    <property type="entry name" value="PPDK_reg"/>
</dbReference>
<dbReference type="NCBIfam" id="NF003742">
    <property type="entry name" value="PRK05339.1"/>
    <property type="match status" value="1"/>
</dbReference>
<dbReference type="PANTHER" id="PTHR31756">
    <property type="entry name" value="PYRUVATE, PHOSPHATE DIKINASE REGULATORY PROTEIN 1, CHLOROPLASTIC"/>
    <property type="match status" value="1"/>
</dbReference>
<dbReference type="PANTHER" id="PTHR31756:SF3">
    <property type="entry name" value="PYRUVATE, PHOSPHATE DIKINASE REGULATORY PROTEIN 1, CHLOROPLASTIC"/>
    <property type="match status" value="1"/>
</dbReference>
<dbReference type="Pfam" id="PF03618">
    <property type="entry name" value="Kinase-PPPase"/>
    <property type="match status" value="1"/>
</dbReference>